<organism>
    <name type="scientific">Dictyostelium discoideum</name>
    <name type="common">Social amoeba</name>
    <dbReference type="NCBI Taxonomy" id="44689"/>
    <lineage>
        <taxon>Eukaryota</taxon>
        <taxon>Amoebozoa</taxon>
        <taxon>Evosea</taxon>
        <taxon>Eumycetozoa</taxon>
        <taxon>Dictyostelia</taxon>
        <taxon>Dictyosteliales</taxon>
        <taxon>Dictyosteliaceae</taxon>
        <taxon>Dictyostelium</taxon>
    </lineage>
</organism>
<evidence type="ECO:0000255" key="1">
    <source>
        <dbReference type="PROSITE-ProRule" id="PRU00186"/>
    </source>
</evidence>
<evidence type="ECO:0000256" key="2">
    <source>
        <dbReference type="SAM" id="MobiDB-lite"/>
    </source>
</evidence>
<evidence type="ECO:0000305" key="3"/>
<reference key="1">
    <citation type="journal article" date="2005" name="Nature">
        <title>The genome of the social amoeba Dictyostelium discoideum.</title>
        <authorList>
            <person name="Eichinger L."/>
            <person name="Pachebat J.A."/>
            <person name="Gloeckner G."/>
            <person name="Rajandream M.A."/>
            <person name="Sucgang R."/>
            <person name="Berriman M."/>
            <person name="Song J."/>
            <person name="Olsen R."/>
            <person name="Szafranski K."/>
            <person name="Xu Q."/>
            <person name="Tunggal B."/>
            <person name="Kummerfeld S."/>
            <person name="Madera M."/>
            <person name="Konfortov B.A."/>
            <person name="Rivero F."/>
            <person name="Bankier A.T."/>
            <person name="Lehmann R."/>
            <person name="Hamlin N."/>
            <person name="Davies R."/>
            <person name="Gaudet P."/>
            <person name="Fey P."/>
            <person name="Pilcher K."/>
            <person name="Chen G."/>
            <person name="Saunders D."/>
            <person name="Sodergren E.J."/>
            <person name="Davis P."/>
            <person name="Kerhornou A."/>
            <person name="Nie X."/>
            <person name="Hall N."/>
            <person name="Anjard C."/>
            <person name="Hemphill L."/>
            <person name="Bason N."/>
            <person name="Farbrother P."/>
            <person name="Desany B."/>
            <person name="Just E."/>
            <person name="Morio T."/>
            <person name="Rost R."/>
            <person name="Churcher C.M."/>
            <person name="Cooper J."/>
            <person name="Haydock S."/>
            <person name="van Driessche N."/>
            <person name="Cronin A."/>
            <person name="Goodhead I."/>
            <person name="Muzny D.M."/>
            <person name="Mourier T."/>
            <person name="Pain A."/>
            <person name="Lu M."/>
            <person name="Harper D."/>
            <person name="Lindsay R."/>
            <person name="Hauser H."/>
            <person name="James K.D."/>
            <person name="Quiles M."/>
            <person name="Madan Babu M."/>
            <person name="Saito T."/>
            <person name="Buchrieser C."/>
            <person name="Wardroper A."/>
            <person name="Felder M."/>
            <person name="Thangavelu M."/>
            <person name="Johnson D."/>
            <person name="Knights A."/>
            <person name="Loulseged H."/>
            <person name="Mungall K.L."/>
            <person name="Oliver K."/>
            <person name="Price C."/>
            <person name="Quail M.A."/>
            <person name="Urushihara H."/>
            <person name="Hernandez J."/>
            <person name="Rabbinowitsch E."/>
            <person name="Steffen D."/>
            <person name="Sanders M."/>
            <person name="Ma J."/>
            <person name="Kohara Y."/>
            <person name="Sharp S."/>
            <person name="Simmonds M.N."/>
            <person name="Spiegler S."/>
            <person name="Tivey A."/>
            <person name="Sugano S."/>
            <person name="White B."/>
            <person name="Walker D."/>
            <person name="Woodward J.R."/>
            <person name="Winckler T."/>
            <person name="Tanaka Y."/>
            <person name="Shaulsky G."/>
            <person name="Schleicher M."/>
            <person name="Weinstock G.M."/>
            <person name="Rosenthal A."/>
            <person name="Cox E.C."/>
            <person name="Chisholm R.L."/>
            <person name="Gibbs R.A."/>
            <person name="Loomis W.F."/>
            <person name="Platzer M."/>
            <person name="Kay R.R."/>
            <person name="Williams J.G."/>
            <person name="Dear P.H."/>
            <person name="Noegel A.A."/>
            <person name="Barrell B.G."/>
            <person name="Kuspa A."/>
        </authorList>
    </citation>
    <scope>NUCLEOTIDE SEQUENCE [LARGE SCALE GENOMIC DNA]</scope>
    <source>
        <strain>AX4</strain>
    </source>
</reference>
<accession>Q54UW0</accession>
<proteinExistence type="inferred from homology"/>
<protein>
    <recommendedName>
        <fullName>UPF0746 protein DDB_G0280785</fullName>
    </recommendedName>
</protein>
<keyword id="KW-0238">DNA-binding</keyword>
<keyword id="KW-1185">Reference proteome</keyword>
<dbReference type="EMBL" id="AAFI02000038">
    <property type="protein sequence ID" value="EAL67050.1"/>
    <property type="molecule type" value="Genomic_DNA"/>
</dbReference>
<dbReference type="RefSeq" id="XP_641027.1">
    <property type="nucleotide sequence ID" value="XM_635935.1"/>
</dbReference>
<dbReference type="SMR" id="Q54UW0"/>
<dbReference type="FunCoup" id="Q54UW0">
    <property type="interactions" value="9"/>
</dbReference>
<dbReference type="PaxDb" id="44689-DDB0220672"/>
<dbReference type="EnsemblProtists" id="EAL67050">
    <property type="protein sequence ID" value="EAL67050"/>
    <property type="gene ID" value="DDB_G0280785"/>
</dbReference>
<dbReference type="GeneID" id="8622729"/>
<dbReference type="KEGG" id="ddi:DDB_G0280785"/>
<dbReference type="dictyBase" id="DDB_G0280785"/>
<dbReference type="VEuPathDB" id="AmoebaDB:DDB_G0280785"/>
<dbReference type="eggNOG" id="ENOG502RSNK">
    <property type="taxonomic scope" value="Eukaryota"/>
</dbReference>
<dbReference type="HOGENOM" id="CLU_283779_0_0_1"/>
<dbReference type="InParanoid" id="Q54UW0"/>
<dbReference type="PhylomeDB" id="Q54UW0"/>
<dbReference type="PRO" id="PR:Q54UW0"/>
<dbReference type="Proteomes" id="UP000002195">
    <property type="component" value="Chromosome 3"/>
</dbReference>
<dbReference type="GO" id="GO:0003677">
    <property type="term" value="F:DNA binding"/>
    <property type="evidence" value="ECO:0007669"/>
    <property type="project" value="UniProtKB-KW"/>
</dbReference>
<dbReference type="InterPro" id="IPR003034">
    <property type="entry name" value="SAP_dom"/>
</dbReference>
<dbReference type="InterPro" id="IPR051904">
    <property type="entry name" value="UPF0746_actin_org"/>
</dbReference>
<dbReference type="PANTHER" id="PTHR32488">
    <property type="entry name" value="UPF0746 PROTEIN DDB_G0280785-RELATED"/>
    <property type="match status" value="1"/>
</dbReference>
<dbReference type="PANTHER" id="PTHR32488:SF86">
    <property type="entry name" value="UPF0746 PROTEIN DDB_G0280785-RELATED"/>
    <property type="match status" value="1"/>
</dbReference>
<dbReference type="PROSITE" id="PS50800">
    <property type="entry name" value="SAP"/>
    <property type="match status" value="1"/>
</dbReference>
<sequence length="972" mass="114124">MISNKRKEIENINRHHEKDNDDDDSDGIDNGLLTYKKFKKDFDSGSTNYRELQIIAKSLGLASNGKKQLVYNRIEGYFLSKKVKNNLTNNETNQQEEKKEEEQQQPQPQEKQYILTFKDVEPVEIYFWKVFRNIVIFKHIFSNFKNKQYGYYDLIGCNGVFLNGKSNSMEIIIDNIKSNNNNQIIRNKYNITNIINKFKKNDEKTRSFYNLLFSRYSSTSTSLPIQLSSTIQFDEDIDKWIQRMIENVNFTALDQFIKFFKIDSEVIKKAIKIHVKPSVFGNTTYDKLKIYNYLKSINSIPTSHKLLPFISTDLSAFLSFDNKFKKLIKSYKRLIESTNLQERMEQQEQKEKIKIHPNNKKYYEKLNQKILELNEIQTSQFTNDQLNSTIKNLLNHTTPTSTSTSTSTSTSTLTLTLTPTTNLTITTSTASNNINLKDIIKKFYKSICLFFYCSVYSANERLFRKPLLYYLNFKKESVDKMYERVVNKWNGRSFDHQLFFQSILKDINIEKNEKFELILNVLDNKYVKTFEEYDHYIFFKAVFSSNDIELIDYFLKKIKQLQLNQTQKITKYPSIGKLIGDYCHLIDKKEILDFYFQNYRDECLFFKDQNEIWKQIQLELIEHYEYLMDSIGKRCKLDFYRWFDQNFLDRLNIAILKPSVYSIGFDGYFDIVSEGLVDSNIKDNKENSIINFLSNAQLKHPLSLEIFESSFNPYTSKMLTFIKFLFNNISKESIETKLKVINLKTDNKSFEEINSKIELTTTLTATTTTTTTTTTTKTTTTTTTTANLLSPKKSKDVGCLTIGKTESFNFTISIRMLLVCLYNLDRVDDIIYLFDKLPEVLFNPDYFSIFTNEYCIYGISSSYYLELFINYFIANINDNTINYLYNCLCIASKKGYTQIFKNIISSDQNSKYLLKIQTKSNQSSLFNSKLLNDIVVKSINSLNFELSNLLIDFIDFSAKDKNSLKMKILKLK</sequence>
<comment type="similarity">
    <text evidence="3">Belongs to the UPF0746 family.</text>
</comment>
<feature type="chain" id="PRO_0000377735" description="UPF0746 protein DDB_G0280785">
    <location>
        <begin position="1"/>
        <end position="972"/>
    </location>
</feature>
<feature type="domain" description="SAP" evidence="1">
    <location>
        <begin position="44"/>
        <end position="78"/>
    </location>
</feature>
<feature type="region of interest" description="Disordered" evidence="2">
    <location>
        <begin position="1"/>
        <end position="30"/>
    </location>
</feature>
<feature type="compositionally biased region" description="Basic and acidic residues" evidence="2">
    <location>
        <begin position="1"/>
        <end position="19"/>
    </location>
</feature>
<gene>
    <name type="ORF">DDB_G0280785</name>
</gene>
<name>Y0785_DICDI</name>